<comment type="function">
    <text evidence="1">Component of the NOP7 complex, which is required for maturation of the 25S and 5.8S ribosomal RNAs and formation of the 60S ribosome.</text>
</comment>
<comment type="subunit">
    <text evidence="1">Component of the NOP7 complex, composed of erb1, nop7 and ytm1. The complex is held together by erb1, which interacts with nop7 via its N-terminal domain and with ytm1 via a high-affinity interaction between the seven-bladed beta-propeller domains of the 2 proteins. The NOP7 complex associates with the 66S pre-ribosome.</text>
</comment>
<comment type="subcellular location">
    <subcellularLocation>
        <location evidence="1">Nucleus</location>
        <location evidence="1">Nucleolus</location>
    </subcellularLocation>
    <subcellularLocation>
        <location evidence="1">Nucleus</location>
        <location evidence="1">Nucleoplasm</location>
    </subcellularLocation>
</comment>
<comment type="similarity">
    <text evidence="1">Belongs to the WD repeat BOP1/ERB1 family.</text>
</comment>
<sequence>MSAAKVSKKRKAVTKDVEEEAGVFSGDELNVGDIDGALSDDANDLSSDEEDSEVELVDDFSSDEDEDEEEELDSDEIPSDGEAPLKKKSGTSAADLEVPTNDDESSSEEEQPNFRIEKDANGNDRYIYDEINPDDNSDYSDVEENANTIGNIPLSFYDQYPHIGYDINGKKIMRPATGEALDALLDSIEIPKGFTGLTDPSTGKPLELSQDELELLRKVQMNEIPEEGYNPYEPLMEWFSNKQEIMPLSAAPEPKRRFVPSKHEAKRVMKIVKAIREGRILPYKPPSEEKEEDLELINYDLWADEAERPDHPMHVPAPKLPPPGYEESYHPPPEYLPDNKERKAWQEADPEDREREYLPTDFGSLRKVPGYGEFVKEKFERCLDLYLAPRVRRSKLNIDPESLLPKLPSPEELKPFPSVCATVFRGHKGRVRSLAVDPTGVWLATGGDDGTVRVWELLTGRQLYSVKVGEEDPVNVVRWRPSKDAVVLAAAAGDDIYLIVPPILDPELEQASLDLLDAGWGYAASKPAPKASEEGKKTTPPQWVRPSAALADNGVCAVIPLRYVAKSISWHRRGDYFVTVCPGSSTPASMAIAIHTLSKHLTQYPFSRRIKGGGPPQTAHFHPSKPILFVANQRTVRAYDLSRQLLVKIIQPGARWISSFDIHPTSSTASGGDNLIVGSYDRRLLWHDLELSQRPYKTLRYHRKAIRAVKFHPSGRYPLFADASDDGSLQIFHGSVTGDMLSNASIVPLKVLKGHKITGELGVMDLDWHPREAWCVSAGADGTCRLWM</sequence>
<feature type="chain" id="PRO_0000370419" description="Ribosome biogenesis protein erb1">
    <location>
        <begin position="1"/>
        <end position="788"/>
    </location>
</feature>
<feature type="repeat" description="WD 1">
    <location>
        <begin position="426"/>
        <end position="465"/>
    </location>
</feature>
<feature type="repeat" description="WD 2">
    <location>
        <begin position="469"/>
        <end position="509"/>
    </location>
</feature>
<feature type="repeat" description="WD 3">
    <location>
        <begin position="611"/>
        <end position="649"/>
    </location>
</feature>
<feature type="repeat" description="WD 4">
    <location>
        <begin position="652"/>
        <end position="697"/>
    </location>
</feature>
<feature type="repeat" description="WD 5">
    <location>
        <begin position="701"/>
        <end position="742"/>
    </location>
</feature>
<feature type="repeat" description="WD 6">
    <location>
        <begin position="758"/>
        <end position="788"/>
    </location>
</feature>
<feature type="region of interest" description="Disordered" evidence="2">
    <location>
        <begin position="1"/>
        <end position="125"/>
    </location>
</feature>
<feature type="region of interest" description="Disordered" evidence="2">
    <location>
        <begin position="308"/>
        <end position="354"/>
    </location>
</feature>
<feature type="compositionally biased region" description="Basic residues" evidence="2">
    <location>
        <begin position="1"/>
        <end position="12"/>
    </location>
</feature>
<feature type="compositionally biased region" description="Acidic residues" evidence="2">
    <location>
        <begin position="41"/>
        <end position="79"/>
    </location>
</feature>
<feature type="compositionally biased region" description="Acidic residues" evidence="2">
    <location>
        <begin position="100"/>
        <end position="111"/>
    </location>
</feature>
<feature type="compositionally biased region" description="Basic and acidic residues" evidence="2">
    <location>
        <begin position="115"/>
        <end position="125"/>
    </location>
</feature>
<feature type="compositionally biased region" description="Pro residues" evidence="2">
    <location>
        <begin position="318"/>
        <end position="335"/>
    </location>
</feature>
<feature type="compositionally biased region" description="Basic and acidic residues" evidence="2">
    <location>
        <begin position="337"/>
        <end position="354"/>
    </location>
</feature>
<dbReference type="EMBL" id="AM270157">
    <property type="protein sequence ID" value="CAK45224.1"/>
    <property type="molecule type" value="Genomic_DNA"/>
</dbReference>
<dbReference type="RefSeq" id="XP_001392190.1">
    <property type="nucleotide sequence ID" value="XM_001392153.1"/>
</dbReference>
<dbReference type="SMR" id="A2QPZ4"/>
<dbReference type="EnsemblFungi" id="CAK45224">
    <property type="protein sequence ID" value="CAK45224"/>
    <property type="gene ID" value="An08g00720"/>
</dbReference>
<dbReference type="GeneID" id="4982386"/>
<dbReference type="KEGG" id="ang:An08g00720"/>
<dbReference type="VEuPathDB" id="FungiDB:An08g00720"/>
<dbReference type="HOGENOM" id="CLU_011390_0_1_1"/>
<dbReference type="Proteomes" id="UP000006706">
    <property type="component" value="Chromosome 8R"/>
</dbReference>
<dbReference type="GO" id="GO:0005654">
    <property type="term" value="C:nucleoplasm"/>
    <property type="evidence" value="ECO:0007669"/>
    <property type="project" value="UniProtKB-SubCell"/>
</dbReference>
<dbReference type="GO" id="GO:0070545">
    <property type="term" value="C:PeBoW complex"/>
    <property type="evidence" value="ECO:0007669"/>
    <property type="project" value="EnsemblFungi"/>
</dbReference>
<dbReference type="GO" id="GO:0030687">
    <property type="term" value="C:preribosome, large subunit precursor"/>
    <property type="evidence" value="ECO:0007669"/>
    <property type="project" value="UniProtKB-UniRule"/>
</dbReference>
<dbReference type="GO" id="GO:0070180">
    <property type="term" value="F:large ribosomal subunit rRNA binding"/>
    <property type="evidence" value="ECO:0007669"/>
    <property type="project" value="EnsemblFungi"/>
</dbReference>
<dbReference type="GO" id="GO:0043021">
    <property type="term" value="F:ribonucleoprotein complex binding"/>
    <property type="evidence" value="ECO:0007669"/>
    <property type="project" value="UniProtKB-UniRule"/>
</dbReference>
<dbReference type="GO" id="GO:0000466">
    <property type="term" value="P:maturation of 5.8S rRNA from tricistronic rRNA transcript (SSU-rRNA, 5.8S rRNA, LSU-rRNA)"/>
    <property type="evidence" value="ECO:0007669"/>
    <property type="project" value="UniProtKB-UniRule"/>
</dbReference>
<dbReference type="GO" id="GO:0000463">
    <property type="term" value="P:maturation of LSU-rRNA from tricistronic rRNA transcript (SSU-rRNA, 5.8S rRNA, LSU-rRNA)"/>
    <property type="evidence" value="ECO:0007669"/>
    <property type="project" value="UniProtKB-UniRule"/>
</dbReference>
<dbReference type="FunFam" id="2.130.10.10:FF:000061">
    <property type="entry name" value="Ribosome biogenesis protein BOP1 homolog"/>
    <property type="match status" value="1"/>
</dbReference>
<dbReference type="Gene3D" id="2.130.10.10">
    <property type="entry name" value="YVTN repeat-like/Quinoprotein amine dehydrogenase"/>
    <property type="match status" value="1"/>
</dbReference>
<dbReference type="HAMAP" id="MF_03027">
    <property type="entry name" value="BOP1"/>
    <property type="match status" value="1"/>
</dbReference>
<dbReference type="InterPro" id="IPR028598">
    <property type="entry name" value="BOP1/Erb1"/>
</dbReference>
<dbReference type="InterPro" id="IPR012953">
    <property type="entry name" value="BOP1_N_dom"/>
</dbReference>
<dbReference type="InterPro" id="IPR015943">
    <property type="entry name" value="WD40/YVTN_repeat-like_dom_sf"/>
</dbReference>
<dbReference type="InterPro" id="IPR019775">
    <property type="entry name" value="WD40_repeat_CS"/>
</dbReference>
<dbReference type="InterPro" id="IPR036322">
    <property type="entry name" value="WD40_repeat_dom_sf"/>
</dbReference>
<dbReference type="InterPro" id="IPR001680">
    <property type="entry name" value="WD40_rpt"/>
</dbReference>
<dbReference type="PANTHER" id="PTHR17605:SF0">
    <property type="entry name" value="RIBOSOME BIOGENESIS PROTEIN BOP1"/>
    <property type="match status" value="1"/>
</dbReference>
<dbReference type="PANTHER" id="PTHR17605">
    <property type="entry name" value="RIBOSOME BIOGENESIS PROTEIN BOP1 BLOCK OF PROLIFERATION 1 PROTEIN"/>
    <property type="match status" value="1"/>
</dbReference>
<dbReference type="Pfam" id="PF08145">
    <property type="entry name" value="BOP1NT"/>
    <property type="match status" value="1"/>
</dbReference>
<dbReference type="Pfam" id="PF00400">
    <property type="entry name" value="WD40"/>
    <property type="match status" value="3"/>
</dbReference>
<dbReference type="SMART" id="SM01035">
    <property type="entry name" value="BOP1NT"/>
    <property type="match status" value="1"/>
</dbReference>
<dbReference type="SMART" id="SM00320">
    <property type="entry name" value="WD40"/>
    <property type="match status" value="5"/>
</dbReference>
<dbReference type="SUPFAM" id="SSF50978">
    <property type="entry name" value="WD40 repeat-like"/>
    <property type="match status" value="1"/>
</dbReference>
<dbReference type="PROSITE" id="PS00678">
    <property type="entry name" value="WD_REPEATS_1"/>
    <property type="match status" value="1"/>
</dbReference>
<dbReference type="PROSITE" id="PS50082">
    <property type="entry name" value="WD_REPEATS_2"/>
    <property type="match status" value="2"/>
</dbReference>
<dbReference type="PROSITE" id="PS50294">
    <property type="entry name" value="WD_REPEATS_REGION"/>
    <property type="match status" value="2"/>
</dbReference>
<protein>
    <recommendedName>
        <fullName evidence="1">Ribosome biogenesis protein erb1</fullName>
    </recommendedName>
    <alternativeName>
        <fullName evidence="1">Eukaryotic ribosome biogenesis protein 1</fullName>
    </alternativeName>
</protein>
<name>ERB1_ASPNC</name>
<organism>
    <name type="scientific">Aspergillus niger (strain ATCC MYA-4892 / CBS 513.88 / FGSC A1513)</name>
    <dbReference type="NCBI Taxonomy" id="425011"/>
    <lineage>
        <taxon>Eukaryota</taxon>
        <taxon>Fungi</taxon>
        <taxon>Dikarya</taxon>
        <taxon>Ascomycota</taxon>
        <taxon>Pezizomycotina</taxon>
        <taxon>Eurotiomycetes</taxon>
        <taxon>Eurotiomycetidae</taxon>
        <taxon>Eurotiales</taxon>
        <taxon>Aspergillaceae</taxon>
        <taxon>Aspergillus</taxon>
        <taxon>Aspergillus subgen. Circumdati</taxon>
    </lineage>
</organism>
<accession>A2QPZ4</accession>
<evidence type="ECO:0000255" key="1">
    <source>
        <dbReference type="HAMAP-Rule" id="MF_03027"/>
    </source>
</evidence>
<evidence type="ECO:0000256" key="2">
    <source>
        <dbReference type="SAM" id="MobiDB-lite"/>
    </source>
</evidence>
<proteinExistence type="inferred from homology"/>
<keyword id="KW-0539">Nucleus</keyword>
<keyword id="KW-1185">Reference proteome</keyword>
<keyword id="KW-0677">Repeat</keyword>
<keyword id="KW-0690">Ribosome biogenesis</keyword>
<keyword id="KW-0698">rRNA processing</keyword>
<keyword id="KW-0853">WD repeat</keyword>
<gene>
    <name type="primary">erb1</name>
    <name type="ORF">An08g00720</name>
</gene>
<reference key="1">
    <citation type="journal article" date="2007" name="Nat. Biotechnol.">
        <title>Genome sequencing and analysis of the versatile cell factory Aspergillus niger CBS 513.88.</title>
        <authorList>
            <person name="Pel H.J."/>
            <person name="de Winde J.H."/>
            <person name="Archer D.B."/>
            <person name="Dyer P.S."/>
            <person name="Hofmann G."/>
            <person name="Schaap P.J."/>
            <person name="Turner G."/>
            <person name="de Vries R.P."/>
            <person name="Albang R."/>
            <person name="Albermann K."/>
            <person name="Andersen M.R."/>
            <person name="Bendtsen J.D."/>
            <person name="Benen J.A.E."/>
            <person name="van den Berg M."/>
            <person name="Breestraat S."/>
            <person name="Caddick M.X."/>
            <person name="Contreras R."/>
            <person name="Cornell M."/>
            <person name="Coutinho P.M."/>
            <person name="Danchin E.G.J."/>
            <person name="Debets A.J.M."/>
            <person name="Dekker P."/>
            <person name="van Dijck P.W.M."/>
            <person name="van Dijk A."/>
            <person name="Dijkhuizen L."/>
            <person name="Driessen A.J.M."/>
            <person name="d'Enfert C."/>
            <person name="Geysens S."/>
            <person name="Goosen C."/>
            <person name="Groot G.S.P."/>
            <person name="de Groot P.W.J."/>
            <person name="Guillemette T."/>
            <person name="Henrissat B."/>
            <person name="Herweijer M."/>
            <person name="van den Hombergh J.P.T.W."/>
            <person name="van den Hondel C.A.M.J.J."/>
            <person name="van der Heijden R.T.J.M."/>
            <person name="van der Kaaij R.M."/>
            <person name="Klis F.M."/>
            <person name="Kools H.J."/>
            <person name="Kubicek C.P."/>
            <person name="van Kuyk P.A."/>
            <person name="Lauber J."/>
            <person name="Lu X."/>
            <person name="van der Maarel M.J.E.C."/>
            <person name="Meulenberg R."/>
            <person name="Menke H."/>
            <person name="Mortimer M.A."/>
            <person name="Nielsen J."/>
            <person name="Oliver S.G."/>
            <person name="Olsthoorn M."/>
            <person name="Pal K."/>
            <person name="van Peij N.N.M.E."/>
            <person name="Ram A.F.J."/>
            <person name="Rinas U."/>
            <person name="Roubos J.A."/>
            <person name="Sagt C.M.J."/>
            <person name="Schmoll M."/>
            <person name="Sun J."/>
            <person name="Ussery D."/>
            <person name="Varga J."/>
            <person name="Vervecken W."/>
            <person name="van de Vondervoort P.J.J."/>
            <person name="Wedler H."/>
            <person name="Woesten H.A.B."/>
            <person name="Zeng A.-P."/>
            <person name="van Ooyen A.J.J."/>
            <person name="Visser J."/>
            <person name="Stam H."/>
        </authorList>
    </citation>
    <scope>NUCLEOTIDE SEQUENCE [LARGE SCALE GENOMIC DNA]</scope>
    <source>
        <strain>ATCC MYA-4892 / CBS 513.88 / FGSC A1513</strain>
    </source>
</reference>